<dbReference type="EMBL" id="AAMC01086967">
    <property type="status" value="NOT_ANNOTATED_CDS"/>
    <property type="molecule type" value="Genomic_DNA"/>
</dbReference>
<dbReference type="EMBL" id="AAMC01086968">
    <property type="status" value="NOT_ANNOTATED_CDS"/>
    <property type="molecule type" value="Genomic_DNA"/>
</dbReference>
<dbReference type="EMBL" id="BC158895">
    <property type="protein sequence ID" value="AAI58896.1"/>
    <property type="molecule type" value="mRNA"/>
</dbReference>
<dbReference type="EMBL" id="BC170783">
    <property type="protein sequence ID" value="AAI70783.1"/>
    <property type="molecule type" value="mRNA"/>
</dbReference>
<dbReference type="EMBL" id="BC170789">
    <property type="protein sequence ID" value="AAI70789.1"/>
    <property type="molecule type" value="mRNA"/>
</dbReference>
<dbReference type="RefSeq" id="NP_001016598.1">
    <property type="nucleotide sequence ID" value="NM_001016598.3"/>
</dbReference>
<dbReference type="BMRB" id="B0JYS7"/>
<dbReference type="SMR" id="B0JYS7"/>
<dbReference type="FunCoup" id="B0JYS7">
    <property type="interactions" value="2082"/>
</dbReference>
<dbReference type="STRING" id="8364.ENSXETP00000054643"/>
<dbReference type="PaxDb" id="8364-ENSXETP00000053216"/>
<dbReference type="GeneID" id="549352"/>
<dbReference type="KEGG" id="xtr:549352"/>
<dbReference type="AGR" id="Xenbase:XB-GENE-495092"/>
<dbReference type="CTD" id="6631"/>
<dbReference type="Xenbase" id="XB-GENE-495092">
    <property type="gene designation" value="snrpc"/>
</dbReference>
<dbReference type="eggNOG" id="KOG3454">
    <property type="taxonomic scope" value="Eukaryota"/>
</dbReference>
<dbReference type="HOGENOM" id="CLU_079697_3_0_1"/>
<dbReference type="InParanoid" id="B0JYS7"/>
<dbReference type="OMA" id="QMRPPLM"/>
<dbReference type="OrthoDB" id="76567at2759"/>
<dbReference type="PhylomeDB" id="B0JYS7"/>
<dbReference type="TreeFam" id="TF313578"/>
<dbReference type="Proteomes" id="UP000008143">
    <property type="component" value="Chromosome 2"/>
</dbReference>
<dbReference type="GO" id="GO:0000243">
    <property type="term" value="C:commitment complex"/>
    <property type="evidence" value="ECO:0007669"/>
    <property type="project" value="UniProtKB-UniRule"/>
</dbReference>
<dbReference type="GO" id="GO:0005685">
    <property type="term" value="C:U1 snRNP"/>
    <property type="evidence" value="ECO:0000250"/>
    <property type="project" value="UniProtKB"/>
</dbReference>
<dbReference type="GO" id="GO:0071004">
    <property type="term" value="C:U2-type prespliceosome"/>
    <property type="evidence" value="ECO:0007669"/>
    <property type="project" value="UniProtKB-UniRule"/>
</dbReference>
<dbReference type="GO" id="GO:0003729">
    <property type="term" value="F:mRNA binding"/>
    <property type="evidence" value="ECO:0007669"/>
    <property type="project" value="UniProtKB-UniRule"/>
</dbReference>
<dbReference type="GO" id="GO:0030627">
    <property type="term" value="F:pre-mRNA 5'-splice site binding"/>
    <property type="evidence" value="ECO:0007669"/>
    <property type="project" value="InterPro"/>
</dbReference>
<dbReference type="GO" id="GO:0030619">
    <property type="term" value="F:U1 snRNA binding"/>
    <property type="evidence" value="ECO:0007669"/>
    <property type="project" value="UniProtKB-UniRule"/>
</dbReference>
<dbReference type="GO" id="GO:0008270">
    <property type="term" value="F:zinc ion binding"/>
    <property type="evidence" value="ECO:0007669"/>
    <property type="project" value="UniProtKB-UniRule"/>
</dbReference>
<dbReference type="GO" id="GO:0000395">
    <property type="term" value="P:mRNA 5'-splice site recognition"/>
    <property type="evidence" value="ECO:0007669"/>
    <property type="project" value="UniProtKB-UniRule"/>
</dbReference>
<dbReference type="GO" id="GO:0000387">
    <property type="term" value="P:spliceosomal snRNP assembly"/>
    <property type="evidence" value="ECO:0007669"/>
    <property type="project" value="UniProtKB-UniRule"/>
</dbReference>
<dbReference type="FunFam" id="3.30.160.60:FF:000059">
    <property type="entry name" value="U1 small nuclear ribonucleoprotein C"/>
    <property type="match status" value="1"/>
</dbReference>
<dbReference type="Gene3D" id="3.30.160.60">
    <property type="entry name" value="Classic Zinc Finger"/>
    <property type="match status" value="1"/>
</dbReference>
<dbReference type="HAMAP" id="MF_03153">
    <property type="entry name" value="U1_C"/>
    <property type="match status" value="1"/>
</dbReference>
<dbReference type="InterPro" id="IPR000690">
    <property type="entry name" value="Matrin/U1-C_Znf_C2H2"/>
</dbReference>
<dbReference type="InterPro" id="IPR003604">
    <property type="entry name" value="Matrin/U1-like-C_Znf_C2H2"/>
</dbReference>
<dbReference type="InterPro" id="IPR013085">
    <property type="entry name" value="U1-CZ_Znf_C2H2"/>
</dbReference>
<dbReference type="InterPro" id="IPR017340">
    <property type="entry name" value="U1_snRNP-C"/>
</dbReference>
<dbReference type="InterPro" id="IPR036236">
    <property type="entry name" value="Znf_C2H2_sf"/>
</dbReference>
<dbReference type="PANTHER" id="PTHR31148">
    <property type="entry name" value="U1 SMALL NUCLEAR RIBONUCLEOPROTEIN C"/>
    <property type="match status" value="1"/>
</dbReference>
<dbReference type="PANTHER" id="PTHR31148:SF1">
    <property type="entry name" value="U1 SMALL NUCLEAR RIBONUCLEOPROTEIN C"/>
    <property type="match status" value="1"/>
</dbReference>
<dbReference type="Pfam" id="PF06220">
    <property type="entry name" value="zf-U1"/>
    <property type="match status" value="1"/>
</dbReference>
<dbReference type="PIRSF" id="PIRSF037969">
    <property type="entry name" value="U1_snRNP-C"/>
    <property type="match status" value="1"/>
</dbReference>
<dbReference type="SMART" id="SM00451">
    <property type="entry name" value="ZnF_U1"/>
    <property type="match status" value="1"/>
</dbReference>
<dbReference type="SUPFAM" id="SSF57667">
    <property type="entry name" value="beta-beta-alpha zinc fingers"/>
    <property type="match status" value="1"/>
</dbReference>
<dbReference type="PROSITE" id="PS50171">
    <property type="entry name" value="ZF_MATRIN"/>
    <property type="match status" value="1"/>
</dbReference>
<feature type="chain" id="PRO_0000414255" description="U1 small nuclear ribonucleoprotein C">
    <location>
        <begin position="1"/>
        <end position="159"/>
    </location>
</feature>
<feature type="zinc finger region" description="Matrin-type" evidence="1">
    <location>
        <begin position="4"/>
        <end position="36"/>
    </location>
</feature>
<feature type="region of interest" description="Disordered" evidence="2">
    <location>
        <begin position="63"/>
        <end position="95"/>
    </location>
</feature>
<feature type="region of interest" description="Disordered" evidence="2">
    <location>
        <begin position="139"/>
        <end position="159"/>
    </location>
</feature>
<feature type="compositionally biased region" description="Pro residues" evidence="2">
    <location>
        <begin position="77"/>
        <end position="95"/>
    </location>
</feature>
<keyword id="KW-0479">Metal-binding</keyword>
<keyword id="KW-0539">Nucleus</keyword>
<keyword id="KW-1185">Reference proteome</keyword>
<keyword id="KW-0687">Ribonucleoprotein</keyword>
<keyword id="KW-0694">RNA-binding</keyword>
<keyword id="KW-0862">Zinc</keyword>
<keyword id="KW-0863">Zinc-finger</keyword>
<sequence length="159" mass="17391">MPKFYCDYCDTYLTHDSPSVRKTHCSGRKHKENVKDYYQKWMEEQAQSLIDKTTAAFQQGKIPPTPFAAPPAGSAMIPPPPSMGGPPRPGMMPAPPMAGPPMMPMMGPPPPGMMPVGHGPGMRPPMGAHMPMMPGPPMMRPPTRPMMLQSRPGMARPDR</sequence>
<gene>
    <name evidence="1" type="primary">snrpc</name>
</gene>
<evidence type="ECO:0000255" key="1">
    <source>
        <dbReference type="HAMAP-Rule" id="MF_03153"/>
    </source>
</evidence>
<evidence type="ECO:0000256" key="2">
    <source>
        <dbReference type="SAM" id="MobiDB-lite"/>
    </source>
</evidence>
<proteinExistence type="evidence at transcript level"/>
<comment type="function">
    <text evidence="1">Component of the spliceosomal U1 snRNP, which is essential for recognition of the pre-mRNA 5' splice-site and the subsequent assembly of the spliceosome. snrpc/U1-C is directly involved in initial 5' splice-site recognition for both constitutive and regulated alternative splicing. The interaction with the 5' splice-site seems to precede base-pairing between the pre-mRNA and the U1 snRNA. Stimulates commitment or early (E) complex formation by stabilizing the base pairing of the 5' end of the U1 snRNA and the 5' splice-site region.</text>
</comment>
<comment type="subunit">
    <text evidence="1">Component of the U1 snRNP. The U1 snRNP is composed of the U1 snRNA and the 7 core Sm proteins snrpb, snrpd1, snrpd2, snrpd3, snrpe, snrpf and snrpg that assemble in a heptameric protein ring on the Sm site of the small nuclear RNA to form the core snRNP, and at least 3 U1 snRNP-specific proteins snrnp70/U1-70K, snrpa/U1-A and snrpc/U1-C. snrpc/U1-C interacts with U1 snRNA and the 5' splice-site region of the pre-mRNA.</text>
</comment>
<comment type="subcellular location">
    <subcellularLocation>
        <location evidence="1">Nucleus</location>
    </subcellularLocation>
</comment>
<comment type="similarity">
    <text evidence="1">Belongs to the U1 small nuclear ribonucleoprotein C family.</text>
</comment>
<organism>
    <name type="scientific">Xenopus tropicalis</name>
    <name type="common">Western clawed frog</name>
    <name type="synonym">Silurana tropicalis</name>
    <dbReference type="NCBI Taxonomy" id="8364"/>
    <lineage>
        <taxon>Eukaryota</taxon>
        <taxon>Metazoa</taxon>
        <taxon>Chordata</taxon>
        <taxon>Craniata</taxon>
        <taxon>Vertebrata</taxon>
        <taxon>Euteleostomi</taxon>
        <taxon>Amphibia</taxon>
        <taxon>Batrachia</taxon>
        <taxon>Anura</taxon>
        <taxon>Pipoidea</taxon>
        <taxon>Pipidae</taxon>
        <taxon>Xenopodinae</taxon>
        <taxon>Xenopus</taxon>
        <taxon>Silurana</taxon>
    </lineage>
</organism>
<reference key="1">
    <citation type="journal article" date="2010" name="Science">
        <title>The genome of the Western clawed frog Xenopus tropicalis.</title>
        <authorList>
            <person name="Hellsten U."/>
            <person name="Harland R.M."/>
            <person name="Gilchrist M.J."/>
            <person name="Hendrix D."/>
            <person name="Jurka J."/>
            <person name="Kapitonov V."/>
            <person name="Ovcharenko I."/>
            <person name="Putnam N.H."/>
            <person name="Shu S."/>
            <person name="Taher L."/>
            <person name="Blitz I.L."/>
            <person name="Blumberg B."/>
            <person name="Dichmann D.S."/>
            <person name="Dubchak I."/>
            <person name="Amaya E."/>
            <person name="Detter J.C."/>
            <person name="Fletcher R."/>
            <person name="Gerhard D.S."/>
            <person name="Goodstein D."/>
            <person name="Graves T."/>
            <person name="Grigoriev I.V."/>
            <person name="Grimwood J."/>
            <person name="Kawashima T."/>
            <person name="Lindquist E."/>
            <person name="Lucas S.M."/>
            <person name="Mead P.E."/>
            <person name="Mitros T."/>
            <person name="Ogino H."/>
            <person name="Ohta Y."/>
            <person name="Poliakov A.V."/>
            <person name="Pollet N."/>
            <person name="Robert J."/>
            <person name="Salamov A."/>
            <person name="Sater A.K."/>
            <person name="Schmutz J."/>
            <person name="Terry A."/>
            <person name="Vize P.D."/>
            <person name="Warren W.C."/>
            <person name="Wells D."/>
            <person name="Wills A."/>
            <person name="Wilson R.K."/>
            <person name="Zimmerman L.B."/>
            <person name="Zorn A.M."/>
            <person name="Grainger R."/>
            <person name="Grammer T."/>
            <person name="Khokha M.K."/>
            <person name="Richardson P.M."/>
            <person name="Rokhsar D.S."/>
        </authorList>
    </citation>
    <scope>NUCLEOTIDE SEQUENCE [LARGE SCALE GENOMIC DNA]</scope>
</reference>
<reference key="2">
    <citation type="submission" date="2008-11" db="EMBL/GenBank/DDBJ databases">
        <authorList>
            <consortium name="NIH - Xenopus Gene Collection (XGC) project"/>
        </authorList>
    </citation>
    <scope>NUCLEOTIDE SEQUENCE [LARGE SCALE MRNA]</scope>
    <source>
        <tissue>Embryo</tissue>
        <tissue>Neurula</tissue>
    </source>
</reference>
<accession>B0JYS7</accession>
<name>RU1C_XENTR</name>
<protein>
    <recommendedName>
        <fullName evidence="1">U1 small nuclear ribonucleoprotein C</fullName>
        <shortName evidence="1">U1 snRNP C</shortName>
        <shortName evidence="1">U1-C</shortName>
        <shortName evidence="1">U1C</shortName>
    </recommendedName>
</protein>